<evidence type="ECO:0000250" key="1">
    <source>
        <dbReference type="UniProtKB" id="O55043"/>
    </source>
</evidence>
<evidence type="ECO:0000250" key="2">
    <source>
        <dbReference type="UniProtKB" id="P63101"/>
    </source>
</evidence>
<evidence type="ECO:0000250" key="3">
    <source>
        <dbReference type="UniProtKB" id="P63102"/>
    </source>
</evidence>
<evidence type="ECO:0000250" key="4">
    <source>
        <dbReference type="UniProtKB" id="P63103"/>
    </source>
</evidence>
<evidence type="ECO:0000250" key="5">
    <source>
        <dbReference type="UniProtKB" id="P63104"/>
    </source>
</evidence>
<evidence type="ECO:0000250" key="6">
    <source>
        <dbReference type="UniProtKB" id="Q9ES28"/>
    </source>
</evidence>
<evidence type="ECO:0000305" key="7"/>
<proteinExistence type="evidence at transcript level"/>
<gene>
    <name type="primary">YWHAZ</name>
</gene>
<comment type="function">
    <text evidence="1 5">Adapter protein implicated in the regulation of a large spectrum of both general and specialized signaling pathways. Binds to a large number of partners, usually by recognition of a phosphoserine or phosphothreonine motif. Binding generally results in the modulation of the activity of the binding partner. Promotes cytosolic retention and inactivation of TFEB transcription factor by binding to phosphorylated TFEB. Induces ARHGEF7 activity on RAC1 as well as lamellipodia and membrane ruffle formation (By similarity). In neurons, regulates spine maturation through the modulation of ARHGEF7 activity (By similarity).</text>
</comment>
<comment type="subunit">
    <text evidence="2 5 6">Interacts with CDK16 and BSPRY (By similarity). Interacts with WEE1 (C-terminal). Interacts with SAMSN1 (By similarity). Interacts with MLF1 (phosphorylated form); the interaction retains it in the cytoplasm (By similarity). Interacts with Thr-phosphorylated ITGB2 (By similarity). Interacts with BCL2L11 (By similarity). Homodimer. Heterodimerizes with YWHAE. Homo- and heterodimerization is inhibited by phosphorylation on Ser-58. Interacts with FOXO4, NOXA1, SSH1 and ARHGEF2. Interacts with Pseudomonas aeruginosa exoS (unphosphorylated form). Interacts with BAX; the interaction occurs in the cytoplasm. Under stress conditions, MAPK8-mediated phosphorylation releases BAX to mitochondria. Interacts with phosphorylated RAF1; the interaction is inhibited when YWHAZ is phosphorylated on Thr-232. Interacts with TP53; the interaction enhances p53 transcriptional activity. The Ser-58 phosphorylated form inhibits this interaction and p53 transcriptional activity. Interacts with ABL1 (phosphorylated form); the interaction retains ABL1 in the cytoplasm. Interacts with PKA-phosphorylated AANAT; the interaction modulates AANAT enzymatic activity by increasing affinity for arylalkylamines and acetyl-CoA and protecting the enzyme from dephosphorylation and proteasomal degradation. It may also prevent thiol-dependent inactivation. Interacts with AKT1; the interaction phosphorylates YWHAZ and modulates dimerization. Interacts with GAB2 and TLK2. Interacts with the 'Thr-369' phosphorylated form of DAPK2. Interacts with PI4KB, TBC1D22A and TBC1D22B (By similarity). Interacts with ZFP36L1 (via phosphorylated form); this interaction occurs in a p38 MAPK- and AKT-signaling pathways (By similarity). Interacts with SLITRK1 (By similarity). Interacts with AK5, LDB1, MADD, MARK3, PDE1A and SMARCB1 (By similarity). Interacts with YWHAZ (By similarity). Interacts with MEFV (By similarity). Interacts with ADAM22 (via C-terminus) (By similarity).</text>
</comment>
<comment type="subcellular location">
    <subcellularLocation>
        <location evidence="5">Cytoplasm</location>
    </subcellularLocation>
    <subcellularLocation>
        <location evidence="5">Melanosome</location>
    </subcellularLocation>
    <text evidence="5">Located to stage I to stage IV melanosomes.</text>
</comment>
<comment type="PTM">
    <text evidence="5">The delta, brain-specific form differs from the zeta form in being phosphorylated. Phosphorylation on Ser-184 by MAPK8; promotes dissociation of BAX and translocation of BAX to mitochondria. Phosphorylation on Thr-232; inhibits binding of RAF1. Phosphorylated on Ser-58 by PKA and protein kinase C delta type catalytic subunit in a sphingosine-dependent fashion. Phosphorylation on Ser-58 by PKA; disrupts homodimerization and heterodimerization with YHAE and TP53.</text>
</comment>
<comment type="similarity">
    <text evidence="7">Belongs to the 14-3-3 family.</text>
</comment>
<dbReference type="EMBL" id="CR860645">
    <property type="protein sequence ID" value="CAH92765.1"/>
    <property type="molecule type" value="mRNA"/>
</dbReference>
<dbReference type="RefSeq" id="NP_001126612.1">
    <property type="nucleotide sequence ID" value="NM_001133140.1"/>
</dbReference>
<dbReference type="RefSeq" id="XP_009242264.1">
    <property type="nucleotide sequence ID" value="XM_009243989.4"/>
</dbReference>
<dbReference type="RefSeq" id="XP_009242265.1">
    <property type="nucleotide sequence ID" value="XM_009243990.3"/>
</dbReference>
<dbReference type="RefSeq" id="XP_009242266.1">
    <property type="nucleotide sequence ID" value="XM_009243991.4"/>
</dbReference>
<dbReference type="RefSeq" id="XP_063582397.1">
    <property type="nucleotide sequence ID" value="XM_063726327.1"/>
</dbReference>
<dbReference type="RefSeq" id="XP_063582398.1">
    <property type="nucleotide sequence ID" value="XM_063726328.1"/>
</dbReference>
<dbReference type="SMR" id="Q5R651"/>
<dbReference type="FunCoup" id="Q5R651">
    <property type="interactions" value="2845"/>
</dbReference>
<dbReference type="STRING" id="9601.ENSPPYP00000021077"/>
<dbReference type="Ensembl" id="ENSPPYT00000021920.3">
    <property type="protein sequence ID" value="ENSPPYP00000021077.2"/>
    <property type="gene ID" value="ENSPPYG00000018791.3"/>
</dbReference>
<dbReference type="GeneID" id="100173609"/>
<dbReference type="KEGG" id="pon:100173609"/>
<dbReference type="CTD" id="7534"/>
<dbReference type="eggNOG" id="KOG0841">
    <property type="taxonomic scope" value="Eukaryota"/>
</dbReference>
<dbReference type="GeneTree" id="ENSGT01090000260040"/>
<dbReference type="HOGENOM" id="CLU_058290_1_0_1"/>
<dbReference type="InParanoid" id="Q5R651"/>
<dbReference type="OMA" id="YDEMVNE"/>
<dbReference type="OrthoDB" id="9478620at2759"/>
<dbReference type="TreeFam" id="TF102003"/>
<dbReference type="Proteomes" id="UP000001595">
    <property type="component" value="Chromosome 8"/>
</dbReference>
<dbReference type="GO" id="GO:0042470">
    <property type="term" value="C:melanosome"/>
    <property type="evidence" value="ECO:0007669"/>
    <property type="project" value="UniProtKB-SubCell"/>
</dbReference>
<dbReference type="GO" id="GO:0042802">
    <property type="term" value="F:identical protein binding"/>
    <property type="evidence" value="ECO:0007669"/>
    <property type="project" value="UniProtKB-ARBA"/>
</dbReference>
<dbReference type="GO" id="GO:0050815">
    <property type="term" value="F:phosphoserine residue binding"/>
    <property type="evidence" value="ECO:0000250"/>
    <property type="project" value="UniProtKB"/>
</dbReference>
<dbReference type="GO" id="GO:0140311">
    <property type="term" value="F:protein sequestering activity"/>
    <property type="evidence" value="ECO:0000250"/>
    <property type="project" value="UniProtKB"/>
</dbReference>
<dbReference type="GO" id="GO:0006468">
    <property type="term" value="P:protein phosphorylation"/>
    <property type="evidence" value="ECO:0000250"/>
    <property type="project" value="UniProtKB"/>
</dbReference>
<dbReference type="GO" id="GO:0070372">
    <property type="term" value="P:regulation of ERK1 and ERK2 cascade"/>
    <property type="evidence" value="ECO:0000250"/>
    <property type="project" value="UniProtKB"/>
</dbReference>
<dbReference type="GO" id="GO:0007165">
    <property type="term" value="P:signal transduction"/>
    <property type="evidence" value="ECO:0000250"/>
    <property type="project" value="UniProtKB"/>
</dbReference>
<dbReference type="CDD" id="cd10022">
    <property type="entry name" value="14-3-3_beta_zeta"/>
    <property type="match status" value="1"/>
</dbReference>
<dbReference type="FunFam" id="1.20.190.20:FF:000001">
    <property type="entry name" value="14-3-3 gamma 1"/>
    <property type="match status" value="1"/>
</dbReference>
<dbReference type="Gene3D" id="1.20.190.20">
    <property type="entry name" value="14-3-3 domain"/>
    <property type="match status" value="1"/>
</dbReference>
<dbReference type="InterPro" id="IPR000308">
    <property type="entry name" value="14-3-3"/>
</dbReference>
<dbReference type="InterPro" id="IPR023409">
    <property type="entry name" value="14-3-3_CS"/>
</dbReference>
<dbReference type="InterPro" id="IPR036815">
    <property type="entry name" value="14-3-3_dom_sf"/>
</dbReference>
<dbReference type="InterPro" id="IPR023410">
    <property type="entry name" value="14-3-3_domain"/>
</dbReference>
<dbReference type="PANTHER" id="PTHR18860">
    <property type="entry name" value="14-3-3 PROTEIN"/>
    <property type="match status" value="1"/>
</dbReference>
<dbReference type="Pfam" id="PF00244">
    <property type="entry name" value="14-3-3"/>
    <property type="match status" value="1"/>
</dbReference>
<dbReference type="PIRSF" id="PIRSF000868">
    <property type="entry name" value="14-3-3"/>
    <property type="match status" value="1"/>
</dbReference>
<dbReference type="PRINTS" id="PR00305">
    <property type="entry name" value="1433ZETA"/>
</dbReference>
<dbReference type="SMART" id="SM00101">
    <property type="entry name" value="14_3_3"/>
    <property type="match status" value="1"/>
</dbReference>
<dbReference type="SUPFAM" id="SSF48445">
    <property type="entry name" value="14-3-3 protein"/>
    <property type="match status" value="1"/>
</dbReference>
<dbReference type="PROSITE" id="PS00796">
    <property type="entry name" value="1433_1"/>
    <property type="match status" value="1"/>
</dbReference>
<dbReference type="PROSITE" id="PS00797">
    <property type="entry name" value="1433_2"/>
    <property type="match status" value="1"/>
</dbReference>
<accession>Q5R651</accession>
<organism>
    <name type="scientific">Pongo abelii</name>
    <name type="common">Sumatran orangutan</name>
    <name type="synonym">Pongo pygmaeus abelii</name>
    <dbReference type="NCBI Taxonomy" id="9601"/>
    <lineage>
        <taxon>Eukaryota</taxon>
        <taxon>Metazoa</taxon>
        <taxon>Chordata</taxon>
        <taxon>Craniata</taxon>
        <taxon>Vertebrata</taxon>
        <taxon>Euteleostomi</taxon>
        <taxon>Mammalia</taxon>
        <taxon>Eutheria</taxon>
        <taxon>Euarchontoglires</taxon>
        <taxon>Primates</taxon>
        <taxon>Haplorrhini</taxon>
        <taxon>Catarrhini</taxon>
        <taxon>Hominidae</taxon>
        <taxon>Pongo</taxon>
    </lineage>
</organism>
<name>1433Z_PONAB</name>
<protein>
    <recommendedName>
        <fullName>14-3-3 protein zeta/delta</fullName>
    </recommendedName>
</protein>
<feature type="chain" id="PRO_0000058629" description="14-3-3 protein zeta/delta">
    <location>
        <begin position="1"/>
        <end position="245"/>
    </location>
</feature>
<feature type="site" description="Interaction with phosphoserine on interacting protein" evidence="4">
    <location>
        <position position="56"/>
    </location>
</feature>
<feature type="site" description="Interaction with phosphoserine on interacting protein" evidence="4">
    <location>
        <position position="127"/>
    </location>
</feature>
<feature type="modified residue" description="N-acetylmethionine" evidence="5">
    <location>
        <position position="1"/>
    </location>
</feature>
<feature type="modified residue" description="N6-acetyllysine" evidence="5">
    <location>
        <position position="3"/>
    </location>
</feature>
<feature type="modified residue" description="Phosphoserine; by PKA" evidence="5">
    <location>
        <position position="58"/>
    </location>
</feature>
<feature type="modified residue" description="N6-acetyllysine" evidence="5">
    <location>
        <position position="68"/>
    </location>
</feature>
<feature type="modified residue" description="Phosphoserine" evidence="5">
    <location>
        <position position="184"/>
    </location>
</feature>
<feature type="modified residue" description="Phosphoserine" evidence="5">
    <location>
        <position position="207"/>
    </location>
</feature>
<feature type="modified residue" description="Phosphoserine" evidence="3">
    <location>
        <position position="210"/>
    </location>
</feature>
<feature type="modified residue" description="Phosphothreonine; by CK1" evidence="5">
    <location>
        <position position="232"/>
    </location>
</feature>
<reference key="1">
    <citation type="submission" date="2004-11" db="EMBL/GenBank/DDBJ databases">
        <authorList>
            <consortium name="The German cDNA consortium"/>
        </authorList>
    </citation>
    <scope>NUCLEOTIDE SEQUENCE [LARGE SCALE MRNA]</scope>
    <source>
        <tissue>Brain cortex</tissue>
    </source>
</reference>
<sequence>MDKNELVQKAKLAEQAERYDDMAACMKSVTEQGAELSNEERNLLSVAYKNVVGARRSSWRVVSSIEQKTEGAEKKQQMAREYREKIETELRDICNDVLSLLEKFLIPNASQAESKVFYLKMKGDYYRYLAEVAAGDDKKGIVDQSQQAYQEAFEISKKEMQPTHPIRLGLALNFSVFYYEILNSPEKACSLAKTAFDEAIAELDTLSEESYKDSTLIMQLLRDNLTLWTSDTQGDEAEAGEGGEN</sequence>
<keyword id="KW-0007">Acetylation</keyword>
<keyword id="KW-0963">Cytoplasm</keyword>
<keyword id="KW-0597">Phosphoprotein</keyword>
<keyword id="KW-1185">Reference proteome</keyword>